<keyword id="KW-0021">Allosteric enzyme</keyword>
<keyword id="KW-0328">Glycosyltransferase</keyword>
<keyword id="KW-0342">GTP-binding</keyword>
<keyword id="KW-0460">Magnesium</keyword>
<keyword id="KW-0547">Nucleotide-binding</keyword>
<keyword id="KW-0808">Transferase</keyword>
<accession>B2HU54</accession>
<reference key="1">
    <citation type="journal article" date="2008" name="Antimicrob. Agents Chemother.">
        <title>Whole-genome pyrosequencing of an epidemic multidrug-resistant Acinetobacter baumannii strain belonging to the European clone II group.</title>
        <authorList>
            <person name="Iacono M."/>
            <person name="Villa L."/>
            <person name="Fortini D."/>
            <person name="Bordoni R."/>
            <person name="Imperi F."/>
            <person name="Bonnal R.J."/>
            <person name="Sicheritz-Ponten T."/>
            <person name="De Bellis G."/>
            <person name="Visca P."/>
            <person name="Cassone A."/>
            <person name="Carattoli A."/>
        </authorList>
    </citation>
    <scope>NUCLEOTIDE SEQUENCE [LARGE SCALE GENOMIC DNA]</scope>
    <source>
        <strain>ACICU</strain>
    </source>
</reference>
<protein>
    <recommendedName>
        <fullName evidence="1">Uracil phosphoribosyltransferase</fullName>
        <ecNumber evidence="1">2.4.2.9</ecNumber>
    </recommendedName>
    <alternativeName>
        <fullName evidence="1">UMP pyrophosphorylase</fullName>
    </alternativeName>
    <alternativeName>
        <fullName evidence="1">UPRTase</fullName>
    </alternativeName>
</protein>
<sequence length="211" mass="22833">MAIQEIRHPLIRHKLGLLRRADISTKNFRELAQEVTMLLTYEATKDLPVVDCEIEGWAGNVTTQRIAGKKITIVPILRAGIGMLDGVLNLIPSAKVSVLGLERDEATLEVRTYYKKLVPDVANRIAMIIDPMLATGNSLVAAIDVLKASGCKDIRVMVLVAAPEGIAKVEAAHPDIQLYTASIDNGLNEHGYIVPGLGDAGDKIFGSVQKD</sequence>
<gene>
    <name evidence="1" type="primary">upp</name>
    <name type="ordered locus">ACICU_00722</name>
</gene>
<feature type="chain" id="PRO_1000139084" description="Uracil phosphoribosyltransferase">
    <location>
        <begin position="1"/>
        <end position="211"/>
    </location>
</feature>
<feature type="binding site" evidence="1">
    <location>
        <position position="78"/>
    </location>
    <ligand>
        <name>5-phospho-alpha-D-ribose 1-diphosphate</name>
        <dbReference type="ChEBI" id="CHEBI:58017"/>
    </ligand>
</feature>
<feature type="binding site" evidence="1">
    <location>
        <position position="103"/>
    </location>
    <ligand>
        <name>5-phospho-alpha-D-ribose 1-diphosphate</name>
        <dbReference type="ChEBI" id="CHEBI:58017"/>
    </ligand>
</feature>
<feature type="binding site" evidence="1">
    <location>
        <begin position="130"/>
        <end position="138"/>
    </location>
    <ligand>
        <name>5-phospho-alpha-D-ribose 1-diphosphate</name>
        <dbReference type="ChEBI" id="CHEBI:58017"/>
    </ligand>
</feature>
<feature type="binding site" evidence="1">
    <location>
        <position position="193"/>
    </location>
    <ligand>
        <name>uracil</name>
        <dbReference type="ChEBI" id="CHEBI:17568"/>
    </ligand>
</feature>
<feature type="binding site" evidence="1">
    <location>
        <begin position="198"/>
        <end position="200"/>
    </location>
    <ligand>
        <name>uracil</name>
        <dbReference type="ChEBI" id="CHEBI:17568"/>
    </ligand>
</feature>
<feature type="binding site" evidence="1">
    <location>
        <position position="199"/>
    </location>
    <ligand>
        <name>5-phospho-alpha-D-ribose 1-diphosphate</name>
        <dbReference type="ChEBI" id="CHEBI:58017"/>
    </ligand>
</feature>
<proteinExistence type="inferred from homology"/>
<organism>
    <name type="scientific">Acinetobacter baumannii (strain ACICU)</name>
    <dbReference type="NCBI Taxonomy" id="405416"/>
    <lineage>
        <taxon>Bacteria</taxon>
        <taxon>Pseudomonadati</taxon>
        <taxon>Pseudomonadota</taxon>
        <taxon>Gammaproteobacteria</taxon>
        <taxon>Moraxellales</taxon>
        <taxon>Moraxellaceae</taxon>
        <taxon>Acinetobacter</taxon>
        <taxon>Acinetobacter calcoaceticus/baumannii complex</taxon>
    </lineage>
</organism>
<comment type="function">
    <text evidence="1">Catalyzes the conversion of uracil and 5-phospho-alpha-D-ribose 1-diphosphate (PRPP) to UMP and diphosphate.</text>
</comment>
<comment type="catalytic activity">
    <reaction evidence="1">
        <text>UMP + diphosphate = 5-phospho-alpha-D-ribose 1-diphosphate + uracil</text>
        <dbReference type="Rhea" id="RHEA:13017"/>
        <dbReference type="ChEBI" id="CHEBI:17568"/>
        <dbReference type="ChEBI" id="CHEBI:33019"/>
        <dbReference type="ChEBI" id="CHEBI:57865"/>
        <dbReference type="ChEBI" id="CHEBI:58017"/>
        <dbReference type="EC" id="2.4.2.9"/>
    </reaction>
</comment>
<comment type="cofactor">
    <cofactor evidence="1">
        <name>Mg(2+)</name>
        <dbReference type="ChEBI" id="CHEBI:18420"/>
    </cofactor>
    <text evidence="1">Binds 1 Mg(2+) ion per subunit. The magnesium is bound as Mg-PRPP.</text>
</comment>
<comment type="activity regulation">
    <text evidence="1">Allosterically activated by GTP.</text>
</comment>
<comment type="pathway">
    <text evidence="1">Pyrimidine metabolism; UMP biosynthesis via salvage pathway; UMP from uracil: step 1/1.</text>
</comment>
<comment type="similarity">
    <text evidence="1">Belongs to the UPRTase family.</text>
</comment>
<dbReference type="EC" id="2.4.2.9" evidence="1"/>
<dbReference type="EMBL" id="CP000863">
    <property type="protein sequence ID" value="ACC56034.1"/>
    <property type="molecule type" value="Genomic_DNA"/>
</dbReference>
<dbReference type="RefSeq" id="WP_001007343.1">
    <property type="nucleotide sequence ID" value="NZ_CP031380.1"/>
</dbReference>
<dbReference type="SMR" id="B2HU54"/>
<dbReference type="GeneID" id="92892695"/>
<dbReference type="KEGG" id="abc:ACICU_00722"/>
<dbReference type="HOGENOM" id="CLU_067096_2_2_6"/>
<dbReference type="UniPathway" id="UPA00574">
    <property type="reaction ID" value="UER00636"/>
</dbReference>
<dbReference type="Proteomes" id="UP000008839">
    <property type="component" value="Chromosome"/>
</dbReference>
<dbReference type="GO" id="GO:0005525">
    <property type="term" value="F:GTP binding"/>
    <property type="evidence" value="ECO:0007669"/>
    <property type="project" value="UniProtKB-KW"/>
</dbReference>
<dbReference type="GO" id="GO:0000287">
    <property type="term" value="F:magnesium ion binding"/>
    <property type="evidence" value="ECO:0007669"/>
    <property type="project" value="UniProtKB-UniRule"/>
</dbReference>
<dbReference type="GO" id="GO:0004845">
    <property type="term" value="F:uracil phosphoribosyltransferase activity"/>
    <property type="evidence" value="ECO:0007669"/>
    <property type="project" value="UniProtKB-UniRule"/>
</dbReference>
<dbReference type="GO" id="GO:0044206">
    <property type="term" value="P:UMP salvage"/>
    <property type="evidence" value="ECO:0007669"/>
    <property type="project" value="UniProtKB-UniRule"/>
</dbReference>
<dbReference type="GO" id="GO:0006223">
    <property type="term" value="P:uracil salvage"/>
    <property type="evidence" value="ECO:0007669"/>
    <property type="project" value="InterPro"/>
</dbReference>
<dbReference type="CDD" id="cd06223">
    <property type="entry name" value="PRTases_typeI"/>
    <property type="match status" value="1"/>
</dbReference>
<dbReference type="FunFam" id="3.40.50.2020:FF:000003">
    <property type="entry name" value="Uracil phosphoribosyltransferase"/>
    <property type="match status" value="1"/>
</dbReference>
<dbReference type="Gene3D" id="3.40.50.2020">
    <property type="match status" value="1"/>
</dbReference>
<dbReference type="HAMAP" id="MF_01218_B">
    <property type="entry name" value="Upp_B"/>
    <property type="match status" value="1"/>
</dbReference>
<dbReference type="InterPro" id="IPR000836">
    <property type="entry name" value="PRibTrfase_dom"/>
</dbReference>
<dbReference type="InterPro" id="IPR029057">
    <property type="entry name" value="PRTase-like"/>
</dbReference>
<dbReference type="InterPro" id="IPR034332">
    <property type="entry name" value="Upp_B"/>
</dbReference>
<dbReference type="InterPro" id="IPR050054">
    <property type="entry name" value="UPRTase/APRTase"/>
</dbReference>
<dbReference type="InterPro" id="IPR005765">
    <property type="entry name" value="Ura_phspho_trans"/>
</dbReference>
<dbReference type="NCBIfam" id="NF001097">
    <property type="entry name" value="PRK00129.1"/>
    <property type="match status" value="1"/>
</dbReference>
<dbReference type="NCBIfam" id="TIGR01091">
    <property type="entry name" value="upp"/>
    <property type="match status" value="1"/>
</dbReference>
<dbReference type="PANTHER" id="PTHR32315">
    <property type="entry name" value="ADENINE PHOSPHORIBOSYLTRANSFERASE"/>
    <property type="match status" value="1"/>
</dbReference>
<dbReference type="PANTHER" id="PTHR32315:SF4">
    <property type="entry name" value="URACIL PHOSPHORIBOSYLTRANSFERASE, CHLOROPLASTIC"/>
    <property type="match status" value="1"/>
</dbReference>
<dbReference type="Pfam" id="PF14681">
    <property type="entry name" value="UPRTase"/>
    <property type="match status" value="1"/>
</dbReference>
<dbReference type="SUPFAM" id="SSF53271">
    <property type="entry name" value="PRTase-like"/>
    <property type="match status" value="1"/>
</dbReference>
<name>UPP_ACIBC</name>
<evidence type="ECO:0000255" key="1">
    <source>
        <dbReference type="HAMAP-Rule" id="MF_01218"/>
    </source>
</evidence>